<comment type="function">
    <text evidence="1">Binds the lower part of the 30S subunit head. Binds mRNA in the 70S ribosome, positioning it for translation.</text>
</comment>
<comment type="subunit">
    <text evidence="1">Part of the 30S ribosomal subunit. Forms a tight complex with proteins S10 and S14.</text>
</comment>
<comment type="similarity">
    <text evidence="1">Belongs to the universal ribosomal protein uS3 family.</text>
</comment>
<reference key="1">
    <citation type="journal article" date="2001" name="Lancet">
        <title>Whole genome sequencing of meticillin-resistant Staphylococcus aureus.</title>
        <authorList>
            <person name="Kuroda M."/>
            <person name="Ohta T."/>
            <person name="Uchiyama I."/>
            <person name="Baba T."/>
            <person name="Yuzawa H."/>
            <person name="Kobayashi I."/>
            <person name="Cui L."/>
            <person name="Oguchi A."/>
            <person name="Aoki K."/>
            <person name="Nagai Y."/>
            <person name="Lian J.-Q."/>
            <person name="Ito T."/>
            <person name="Kanamori M."/>
            <person name="Matsumaru H."/>
            <person name="Maruyama A."/>
            <person name="Murakami H."/>
            <person name="Hosoyama A."/>
            <person name="Mizutani-Ui Y."/>
            <person name="Takahashi N.K."/>
            <person name="Sawano T."/>
            <person name="Inoue R."/>
            <person name="Kaito C."/>
            <person name="Sekimizu K."/>
            <person name="Hirakawa H."/>
            <person name="Kuhara S."/>
            <person name="Goto S."/>
            <person name="Yabuzaki J."/>
            <person name="Kanehisa M."/>
            <person name="Yamashita A."/>
            <person name="Oshima K."/>
            <person name="Furuya K."/>
            <person name="Yoshino C."/>
            <person name="Shiba T."/>
            <person name="Hattori M."/>
            <person name="Ogasawara N."/>
            <person name="Hayashi H."/>
            <person name="Hiramatsu K."/>
        </authorList>
    </citation>
    <scope>NUCLEOTIDE SEQUENCE [LARGE SCALE GENOMIC DNA]</scope>
    <source>
        <strain>Mu50 / ATCC 700699</strain>
    </source>
</reference>
<name>RS3_STAAM</name>
<protein>
    <recommendedName>
        <fullName evidence="1">Small ribosomal subunit protein uS3</fullName>
    </recommendedName>
    <alternativeName>
        <fullName evidence="2">30S ribosomal protein S3</fullName>
    </alternativeName>
</protein>
<accession>P66552</accession>
<accession>Q99S27</accession>
<keyword id="KW-0687">Ribonucleoprotein</keyword>
<keyword id="KW-0689">Ribosomal protein</keyword>
<keyword id="KW-0694">RNA-binding</keyword>
<keyword id="KW-0699">rRNA-binding</keyword>
<gene>
    <name evidence="1" type="primary">rpsC</name>
    <name type="ordered locus">SAV2244</name>
</gene>
<dbReference type="EMBL" id="BA000017">
    <property type="protein sequence ID" value="BAB58406.1"/>
    <property type="molecule type" value="Genomic_DNA"/>
</dbReference>
<dbReference type="RefSeq" id="WP_000529877.1">
    <property type="nucleotide sequence ID" value="NC_002758.2"/>
</dbReference>
<dbReference type="SMR" id="P66552"/>
<dbReference type="GeneID" id="98346556"/>
<dbReference type="KEGG" id="sav:SAV2244"/>
<dbReference type="HOGENOM" id="CLU_058591_0_2_9"/>
<dbReference type="PhylomeDB" id="P66552"/>
<dbReference type="Proteomes" id="UP000002481">
    <property type="component" value="Chromosome"/>
</dbReference>
<dbReference type="GO" id="GO:0022627">
    <property type="term" value="C:cytosolic small ribosomal subunit"/>
    <property type="evidence" value="ECO:0007669"/>
    <property type="project" value="TreeGrafter"/>
</dbReference>
<dbReference type="GO" id="GO:0003729">
    <property type="term" value="F:mRNA binding"/>
    <property type="evidence" value="ECO:0007669"/>
    <property type="project" value="UniProtKB-UniRule"/>
</dbReference>
<dbReference type="GO" id="GO:0019843">
    <property type="term" value="F:rRNA binding"/>
    <property type="evidence" value="ECO:0007669"/>
    <property type="project" value="UniProtKB-UniRule"/>
</dbReference>
<dbReference type="GO" id="GO:0003735">
    <property type="term" value="F:structural constituent of ribosome"/>
    <property type="evidence" value="ECO:0007669"/>
    <property type="project" value="InterPro"/>
</dbReference>
<dbReference type="GO" id="GO:0006412">
    <property type="term" value="P:translation"/>
    <property type="evidence" value="ECO:0007669"/>
    <property type="project" value="UniProtKB-UniRule"/>
</dbReference>
<dbReference type="CDD" id="cd02412">
    <property type="entry name" value="KH-II_30S_S3"/>
    <property type="match status" value="1"/>
</dbReference>
<dbReference type="FunFam" id="3.30.1140.32:FF:000001">
    <property type="entry name" value="30S ribosomal protein S3"/>
    <property type="match status" value="1"/>
</dbReference>
<dbReference type="FunFam" id="3.30.300.20:FF:000001">
    <property type="entry name" value="30S ribosomal protein S3"/>
    <property type="match status" value="1"/>
</dbReference>
<dbReference type="Gene3D" id="3.30.300.20">
    <property type="match status" value="1"/>
</dbReference>
<dbReference type="Gene3D" id="3.30.1140.32">
    <property type="entry name" value="Ribosomal protein S3, C-terminal domain"/>
    <property type="match status" value="1"/>
</dbReference>
<dbReference type="HAMAP" id="MF_01309_B">
    <property type="entry name" value="Ribosomal_uS3_B"/>
    <property type="match status" value="1"/>
</dbReference>
<dbReference type="InterPro" id="IPR004087">
    <property type="entry name" value="KH_dom"/>
</dbReference>
<dbReference type="InterPro" id="IPR015946">
    <property type="entry name" value="KH_dom-like_a/b"/>
</dbReference>
<dbReference type="InterPro" id="IPR004044">
    <property type="entry name" value="KH_dom_type_2"/>
</dbReference>
<dbReference type="InterPro" id="IPR009019">
    <property type="entry name" value="KH_sf_prok-type"/>
</dbReference>
<dbReference type="InterPro" id="IPR036419">
    <property type="entry name" value="Ribosomal_S3_C_sf"/>
</dbReference>
<dbReference type="InterPro" id="IPR005704">
    <property type="entry name" value="Ribosomal_uS3_bac-typ"/>
</dbReference>
<dbReference type="InterPro" id="IPR001351">
    <property type="entry name" value="Ribosomal_uS3_C"/>
</dbReference>
<dbReference type="InterPro" id="IPR018280">
    <property type="entry name" value="Ribosomal_uS3_CS"/>
</dbReference>
<dbReference type="NCBIfam" id="TIGR01009">
    <property type="entry name" value="rpsC_bact"/>
    <property type="match status" value="1"/>
</dbReference>
<dbReference type="PANTHER" id="PTHR11760">
    <property type="entry name" value="30S/40S RIBOSOMAL PROTEIN S3"/>
    <property type="match status" value="1"/>
</dbReference>
<dbReference type="PANTHER" id="PTHR11760:SF19">
    <property type="entry name" value="SMALL RIBOSOMAL SUBUNIT PROTEIN US3C"/>
    <property type="match status" value="1"/>
</dbReference>
<dbReference type="Pfam" id="PF07650">
    <property type="entry name" value="KH_2"/>
    <property type="match status" value="1"/>
</dbReference>
<dbReference type="Pfam" id="PF00189">
    <property type="entry name" value="Ribosomal_S3_C"/>
    <property type="match status" value="1"/>
</dbReference>
<dbReference type="SMART" id="SM00322">
    <property type="entry name" value="KH"/>
    <property type="match status" value="1"/>
</dbReference>
<dbReference type="SUPFAM" id="SSF54814">
    <property type="entry name" value="Prokaryotic type KH domain (KH-domain type II)"/>
    <property type="match status" value="1"/>
</dbReference>
<dbReference type="SUPFAM" id="SSF54821">
    <property type="entry name" value="Ribosomal protein S3 C-terminal domain"/>
    <property type="match status" value="1"/>
</dbReference>
<dbReference type="PROSITE" id="PS50823">
    <property type="entry name" value="KH_TYPE_2"/>
    <property type="match status" value="1"/>
</dbReference>
<dbReference type="PROSITE" id="PS00548">
    <property type="entry name" value="RIBOSOMAL_S3"/>
    <property type="match status" value="1"/>
</dbReference>
<evidence type="ECO:0000255" key="1">
    <source>
        <dbReference type="HAMAP-Rule" id="MF_01309"/>
    </source>
</evidence>
<evidence type="ECO:0000305" key="2"/>
<organism>
    <name type="scientific">Staphylococcus aureus (strain Mu50 / ATCC 700699)</name>
    <dbReference type="NCBI Taxonomy" id="158878"/>
    <lineage>
        <taxon>Bacteria</taxon>
        <taxon>Bacillati</taxon>
        <taxon>Bacillota</taxon>
        <taxon>Bacilli</taxon>
        <taxon>Bacillales</taxon>
        <taxon>Staphylococcaceae</taxon>
        <taxon>Staphylococcus</taxon>
    </lineage>
</organism>
<sequence length="217" mass="24100">MGQKINPIGLRVGIIRDWEAKWYAEKDFASLLHEDLKIRKFIDNELKEASVSHVEIERAANRINIAIHTGKPGMVIGKGGSEIEKLRNKLNALTDKKVHINVIEIKKVDLDARLVAENIARQLENRASFRRVQKQAITRAMKLGAKGIKTQVSGRLGGADIARAEQYSEGTVPLHTLRADIDYAHAEADTTYGKLGVKVWIYRGEVLPTKNTSGGGK</sequence>
<proteinExistence type="inferred from homology"/>
<feature type="chain" id="PRO_0000130198" description="Small ribosomal subunit protein uS3">
    <location>
        <begin position="1"/>
        <end position="217"/>
    </location>
</feature>
<feature type="domain" description="KH type-2" evidence="1">
    <location>
        <begin position="38"/>
        <end position="106"/>
    </location>
</feature>